<dbReference type="EMBL" id="CP000264">
    <property type="protein sequence ID" value="ABD56276.1"/>
    <property type="molecule type" value="Genomic_DNA"/>
</dbReference>
<dbReference type="RefSeq" id="WP_011456478.1">
    <property type="nucleotide sequence ID" value="NC_007802.1"/>
</dbReference>
<dbReference type="SMR" id="Q28LY6"/>
<dbReference type="STRING" id="290400.Jann_3359"/>
<dbReference type="KEGG" id="jan:Jann_3359"/>
<dbReference type="eggNOG" id="COG0234">
    <property type="taxonomic scope" value="Bacteria"/>
</dbReference>
<dbReference type="HOGENOM" id="CLU_132825_1_0_5"/>
<dbReference type="OrthoDB" id="9806791at2"/>
<dbReference type="Proteomes" id="UP000008326">
    <property type="component" value="Chromosome"/>
</dbReference>
<dbReference type="GO" id="GO:0005737">
    <property type="term" value="C:cytoplasm"/>
    <property type="evidence" value="ECO:0007669"/>
    <property type="project" value="UniProtKB-SubCell"/>
</dbReference>
<dbReference type="GO" id="GO:0005524">
    <property type="term" value="F:ATP binding"/>
    <property type="evidence" value="ECO:0007669"/>
    <property type="project" value="InterPro"/>
</dbReference>
<dbReference type="GO" id="GO:0046872">
    <property type="term" value="F:metal ion binding"/>
    <property type="evidence" value="ECO:0007669"/>
    <property type="project" value="TreeGrafter"/>
</dbReference>
<dbReference type="GO" id="GO:0044183">
    <property type="term" value="F:protein folding chaperone"/>
    <property type="evidence" value="ECO:0007669"/>
    <property type="project" value="InterPro"/>
</dbReference>
<dbReference type="GO" id="GO:0051087">
    <property type="term" value="F:protein-folding chaperone binding"/>
    <property type="evidence" value="ECO:0007669"/>
    <property type="project" value="TreeGrafter"/>
</dbReference>
<dbReference type="GO" id="GO:0051082">
    <property type="term" value="F:unfolded protein binding"/>
    <property type="evidence" value="ECO:0007669"/>
    <property type="project" value="TreeGrafter"/>
</dbReference>
<dbReference type="GO" id="GO:0051085">
    <property type="term" value="P:chaperone cofactor-dependent protein refolding"/>
    <property type="evidence" value="ECO:0007669"/>
    <property type="project" value="TreeGrafter"/>
</dbReference>
<dbReference type="CDD" id="cd00320">
    <property type="entry name" value="cpn10"/>
    <property type="match status" value="1"/>
</dbReference>
<dbReference type="FunFam" id="2.30.33.40:FF:000001">
    <property type="entry name" value="10 kDa chaperonin"/>
    <property type="match status" value="1"/>
</dbReference>
<dbReference type="Gene3D" id="2.30.33.40">
    <property type="entry name" value="GroES chaperonin"/>
    <property type="match status" value="1"/>
</dbReference>
<dbReference type="HAMAP" id="MF_00580">
    <property type="entry name" value="CH10"/>
    <property type="match status" value="1"/>
</dbReference>
<dbReference type="InterPro" id="IPR020818">
    <property type="entry name" value="Chaperonin_GroES"/>
</dbReference>
<dbReference type="InterPro" id="IPR037124">
    <property type="entry name" value="Chaperonin_GroES_sf"/>
</dbReference>
<dbReference type="InterPro" id="IPR018369">
    <property type="entry name" value="Chaprnonin_Cpn10_CS"/>
</dbReference>
<dbReference type="InterPro" id="IPR011032">
    <property type="entry name" value="GroES-like_sf"/>
</dbReference>
<dbReference type="NCBIfam" id="NF001527">
    <property type="entry name" value="PRK00364.1-2"/>
    <property type="match status" value="1"/>
</dbReference>
<dbReference type="NCBIfam" id="NF001529">
    <property type="entry name" value="PRK00364.1-5"/>
    <property type="match status" value="1"/>
</dbReference>
<dbReference type="NCBIfam" id="NF001531">
    <property type="entry name" value="PRK00364.2-2"/>
    <property type="match status" value="1"/>
</dbReference>
<dbReference type="NCBIfam" id="NF001533">
    <property type="entry name" value="PRK00364.2-4"/>
    <property type="match status" value="1"/>
</dbReference>
<dbReference type="PANTHER" id="PTHR10772">
    <property type="entry name" value="10 KDA HEAT SHOCK PROTEIN"/>
    <property type="match status" value="1"/>
</dbReference>
<dbReference type="PANTHER" id="PTHR10772:SF58">
    <property type="entry name" value="CO-CHAPERONIN GROES"/>
    <property type="match status" value="1"/>
</dbReference>
<dbReference type="Pfam" id="PF00166">
    <property type="entry name" value="Cpn10"/>
    <property type="match status" value="1"/>
</dbReference>
<dbReference type="PRINTS" id="PR00297">
    <property type="entry name" value="CHAPERONIN10"/>
</dbReference>
<dbReference type="SMART" id="SM00883">
    <property type="entry name" value="Cpn10"/>
    <property type="match status" value="1"/>
</dbReference>
<dbReference type="SUPFAM" id="SSF50129">
    <property type="entry name" value="GroES-like"/>
    <property type="match status" value="1"/>
</dbReference>
<dbReference type="PROSITE" id="PS00681">
    <property type="entry name" value="CHAPERONINS_CPN10"/>
    <property type="match status" value="1"/>
</dbReference>
<organism>
    <name type="scientific">Jannaschia sp. (strain CCS1)</name>
    <dbReference type="NCBI Taxonomy" id="290400"/>
    <lineage>
        <taxon>Bacteria</taxon>
        <taxon>Pseudomonadati</taxon>
        <taxon>Pseudomonadota</taxon>
        <taxon>Alphaproteobacteria</taxon>
        <taxon>Rhodobacterales</taxon>
        <taxon>Roseobacteraceae</taxon>
        <taxon>Jannaschia</taxon>
    </lineage>
</organism>
<feature type="chain" id="PRO_1000025278" description="Co-chaperonin GroES">
    <location>
        <begin position="1"/>
        <end position="95"/>
    </location>
</feature>
<evidence type="ECO:0000255" key="1">
    <source>
        <dbReference type="HAMAP-Rule" id="MF_00580"/>
    </source>
</evidence>
<sequence length="95" mass="10320">MALKPLQDRVLVRRVESEEKTAGGLIIPESAKEKPSEGEVVSCGDGARKDSGELIEMTVKTGDRILFGKWSGTEVTLDGEELLMMKESDILGIIT</sequence>
<accession>Q28LY6</accession>
<comment type="function">
    <text evidence="1">Together with the chaperonin GroEL, plays an essential role in assisting protein folding. The GroEL-GroES system forms a nano-cage that allows encapsulation of the non-native substrate proteins and provides a physical environment optimized to promote and accelerate protein folding. GroES binds to the apical surface of the GroEL ring, thereby capping the opening of the GroEL channel.</text>
</comment>
<comment type="subunit">
    <text evidence="1">Heptamer of 7 subunits arranged in a ring. Interacts with the chaperonin GroEL.</text>
</comment>
<comment type="subcellular location">
    <subcellularLocation>
        <location evidence="1">Cytoplasm</location>
    </subcellularLocation>
</comment>
<comment type="similarity">
    <text evidence="1">Belongs to the GroES chaperonin family.</text>
</comment>
<gene>
    <name evidence="1" type="primary">groES</name>
    <name evidence="1" type="synonym">groS</name>
    <name type="ordered locus">Jann_3359</name>
</gene>
<reference key="1">
    <citation type="submission" date="2006-02" db="EMBL/GenBank/DDBJ databases">
        <title>Complete sequence of chromosome of Jannaschia sp. CCS1.</title>
        <authorList>
            <consortium name="US DOE Joint Genome Institute"/>
            <person name="Copeland A."/>
            <person name="Lucas S."/>
            <person name="Lapidus A."/>
            <person name="Barry K."/>
            <person name="Detter J.C."/>
            <person name="Glavina del Rio T."/>
            <person name="Hammon N."/>
            <person name="Israni S."/>
            <person name="Pitluck S."/>
            <person name="Brettin T."/>
            <person name="Bruce D."/>
            <person name="Han C."/>
            <person name="Tapia R."/>
            <person name="Gilna P."/>
            <person name="Chertkov O."/>
            <person name="Saunders E."/>
            <person name="Schmutz J."/>
            <person name="Larimer F."/>
            <person name="Land M."/>
            <person name="Kyrpides N."/>
            <person name="Lykidis A."/>
            <person name="Moran M.A."/>
            <person name="Belas R."/>
            <person name="Ye W."/>
            <person name="Buchan A."/>
            <person name="Gonzalez J.M."/>
            <person name="Schell M.A."/>
            <person name="Richardson P."/>
        </authorList>
    </citation>
    <scope>NUCLEOTIDE SEQUENCE [LARGE SCALE GENOMIC DNA]</scope>
    <source>
        <strain>CCS1</strain>
    </source>
</reference>
<protein>
    <recommendedName>
        <fullName evidence="1">Co-chaperonin GroES</fullName>
    </recommendedName>
    <alternativeName>
        <fullName evidence="1">10 kDa chaperonin</fullName>
    </alternativeName>
    <alternativeName>
        <fullName evidence="1">Chaperonin-10</fullName>
        <shortName evidence="1">Cpn10</shortName>
    </alternativeName>
</protein>
<name>CH10_JANSC</name>
<keyword id="KW-0143">Chaperone</keyword>
<keyword id="KW-0963">Cytoplasm</keyword>
<keyword id="KW-1185">Reference proteome</keyword>
<proteinExistence type="inferred from homology"/>